<keyword id="KW-0067">ATP-binding</keyword>
<keyword id="KW-0119">Carbohydrate metabolism</keyword>
<keyword id="KW-0320">Glycogen biosynthesis</keyword>
<keyword id="KW-0321">Glycogen metabolism</keyword>
<keyword id="KW-0418">Kinase</keyword>
<keyword id="KW-0547">Nucleotide-binding</keyword>
<keyword id="KW-1185">Reference proteome</keyword>
<keyword id="KW-0808">Transferase</keyword>
<gene>
    <name type="primary">mak</name>
    <name type="synonym">pep2</name>
    <name type="ordered locus">MT0135</name>
</gene>
<evidence type="ECO:0000250" key="1"/>
<evidence type="ECO:0000305" key="2"/>
<name>MAK2_MYCTO</name>
<comment type="function">
    <text evidence="1">Catalyzes the ATP-dependent phosphorylation of maltose to maltose 1-phosphate. Is involved in a branched alpha-glucan biosynthetic pathway from trehalose, together with TreS, GlgE and GlgB (By similarity).</text>
</comment>
<comment type="catalytic activity">
    <reaction>
        <text>D-maltose + ATP = alpha-maltose 1-phosphate + ADP + H(+)</text>
        <dbReference type="Rhea" id="RHEA:31915"/>
        <dbReference type="ChEBI" id="CHEBI:15378"/>
        <dbReference type="ChEBI" id="CHEBI:17306"/>
        <dbReference type="ChEBI" id="CHEBI:30616"/>
        <dbReference type="ChEBI" id="CHEBI:63576"/>
        <dbReference type="ChEBI" id="CHEBI:456216"/>
        <dbReference type="EC" id="2.7.1.175"/>
    </reaction>
</comment>
<comment type="pathway">
    <text>Glycan biosynthesis; glycogen biosynthesis.</text>
</comment>
<comment type="subunit">
    <text evidence="1">Monomer.</text>
</comment>
<comment type="similarity">
    <text evidence="2">Belongs to the aminoglycoside phosphotransferase family.</text>
</comment>
<reference key="1">
    <citation type="journal article" date="2002" name="J. Bacteriol.">
        <title>Whole-genome comparison of Mycobacterium tuberculosis clinical and laboratory strains.</title>
        <authorList>
            <person name="Fleischmann R.D."/>
            <person name="Alland D."/>
            <person name="Eisen J.A."/>
            <person name="Carpenter L."/>
            <person name="White O."/>
            <person name="Peterson J.D."/>
            <person name="DeBoy R.T."/>
            <person name="Dodson R.J."/>
            <person name="Gwinn M.L."/>
            <person name="Haft D.H."/>
            <person name="Hickey E.K."/>
            <person name="Kolonay J.F."/>
            <person name="Nelson W.C."/>
            <person name="Umayam L.A."/>
            <person name="Ermolaeva M.D."/>
            <person name="Salzberg S.L."/>
            <person name="Delcher A."/>
            <person name="Utterback T.R."/>
            <person name="Weidman J.F."/>
            <person name="Khouri H.M."/>
            <person name="Gill J."/>
            <person name="Mikula A."/>
            <person name="Bishai W."/>
            <person name="Jacobs W.R. Jr."/>
            <person name="Venter J.C."/>
            <person name="Fraser C.M."/>
        </authorList>
    </citation>
    <scope>NUCLEOTIDE SEQUENCE [LARGE SCALE GENOMIC DNA]</scope>
    <source>
        <strain>CDC 1551 / Oshkosh</strain>
    </source>
</reference>
<proteinExistence type="inferred from homology"/>
<dbReference type="EC" id="2.7.1.175"/>
<dbReference type="EMBL" id="AE000516">
    <property type="protein sequence ID" value="AAK44359.1"/>
    <property type="molecule type" value="Genomic_DNA"/>
</dbReference>
<dbReference type="RefSeq" id="WP_003899824.1">
    <property type="nucleotide sequence ID" value="NZ_KK341227.1"/>
</dbReference>
<dbReference type="SMR" id="Q7DAF6"/>
<dbReference type="KEGG" id="mtc:MT0135"/>
<dbReference type="PATRIC" id="fig|83331.31.peg.145"/>
<dbReference type="HOGENOM" id="CLU_029675_0_0_11"/>
<dbReference type="UniPathway" id="UPA00164"/>
<dbReference type="Proteomes" id="UP000001020">
    <property type="component" value="Chromosome"/>
</dbReference>
<dbReference type="GO" id="GO:0005524">
    <property type="term" value="F:ATP binding"/>
    <property type="evidence" value="ECO:0007669"/>
    <property type="project" value="UniProtKB-KW"/>
</dbReference>
<dbReference type="GO" id="GO:0016301">
    <property type="term" value="F:kinase activity"/>
    <property type="evidence" value="ECO:0007669"/>
    <property type="project" value="UniProtKB-KW"/>
</dbReference>
<dbReference type="GO" id="GO:0046835">
    <property type="term" value="P:carbohydrate phosphorylation"/>
    <property type="evidence" value="ECO:0000250"/>
    <property type="project" value="UniProtKB"/>
</dbReference>
<dbReference type="GO" id="GO:0005978">
    <property type="term" value="P:glycogen biosynthetic process"/>
    <property type="evidence" value="ECO:0007669"/>
    <property type="project" value="UniProtKB-UniPathway"/>
</dbReference>
<dbReference type="GO" id="GO:0005992">
    <property type="term" value="P:trehalose biosynthetic process"/>
    <property type="evidence" value="ECO:0000250"/>
    <property type="project" value="UniProtKB"/>
</dbReference>
<dbReference type="FunFam" id="3.90.1200.10:FF:000010">
    <property type="entry name" value="Maltokinase"/>
    <property type="match status" value="1"/>
</dbReference>
<dbReference type="Gene3D" id="3.90.1200.10">
    <property type="match status" value="1"/>
</dbReference>
<dbReference type="InterPro" id="IPR011009">
    <property type="entry name" value="Kinase-like_dom_sf"/>
</dbReference>
<dbReference type="InterPro" id="IPR040999">
    <property type="entry name" value="Mak_N_cap"/>
</dbReference>
<dbReference type="Pfam" id="PF18085">
    <property type="entry name" value="Mak_N_cap"/>
    <property type="match status" value="1"/>
</dbReference>
<dbReference type="SUPFAM" id="SSF56112">
    <property type="entry name" value="Protein kinase-like (PK-like)"/>
    <property type="match status" value="1"/>
</dbReference>
<protein>
    <recommendedName>
        <fullName>Maltokinase</fullName>
        <shortName>MaK</shortName>
        <ecNumber>2.7.1.175</ecNumber>
    </recommendedName>
    <alternativeName>
        <fullName>Maltose-1-phosphate synthase</fullName>
    </alternativeName>
</protein>
<accession>Q7DAF6</accession>
<feature type="chain" id="PRO_0000412895" description="Maltokinase">
    <location>
        <begin position="1"/>
        <end position="455"/>
    </location>
</feature>
<sequence length="455" mass="49889">MTRSDTLATKLPWSDWLPRQRWYAGRNRELATVKPGVVVALRHNLDLVLVDVTYTDGATERYQVLVGWDFEPASEYGTKAAIGVADDRTGFDALYDVAGPQFLLSLIVSSAVCGTSTGEVTFTREPDVELPFAAQPRVCDAEQSNTSVIFDRRAILKVFRRVSSGINPDIELNRVLTRAGNPHVARLLGAYQFGRPNRSPTDALAYALGMVTEYEANAAEGWAMATASVRDLFAEGDLYAHEVGGDFAGESYRLGEAVASVHATLADSLGTAQATFPVDRMLARLSSTVAVVPELREYAPTIEQQFQKLAAEAITVQRVHGDLHLGQVLRTPESWLLIDFEGEPGQPLDERRAPDSPLRDVAGVLRSFEYAAYGPLVDQATDKQLAARAREWVERNRAAFCDGYAVASGIDPRDSALLLGAYELDKAVYETGYETRHRPGWLPIPLRSIARLTAS</sequence>
<organism>
    <name type="scientific">Mycobacterium tuberculosis (strain CDC 1551 / Oshkosh)</name>
    <dbReference type="NCBI Taxonomy" id="83331"/>
    <lineage>
        <taxon>Bacteria</taxon>
        <taxon>Bacillati</taxon>
        <taxon>Actinomycetota</taxon>
        <taxon>Actinomycetes</taxon>
        <taxon>Mycobacteriales</taxon>
        <taxon>Mycobacteriaceae</taxon>
        <taxon>Mycobacterium</taxon>
        <taxon>Mycobacterium tuberculosis complex</taxon>
    </lineage>
</organism>